<reference key="1">
    <citation type="journal article" date="2001" name="Science">
        <title>Mechanisms of evolution in Rickettsia conorii and R. prowazekii.</title>
        <authorList>
            <person name="Ogata H."/>
            <person name="Audic S."/>
            <person name="Renesto-Audiffren P."/>
            <person name="Fournier P.-E."/>
            <person name="Barbe V."/>
            <person name="Samson D."/>
            <person name="Roux V."/>
            <person name="Cossart P."/>
            <person name="Weissenbach J."/>
            <person name="Claverie J.-M."/>
            <person name="Raoult D."/>
        </authorList>
    </citation>
    <scope>NUCLEOTIDE SEQUENCE [LARGE SCALE GENOMIC DNA]</scope>
    <source>
        <strain>ATCC VR-613 / Malish 7</strain>
    </source>
</reference>
<organism>
    <name type="scientific">Rickettsia conorii (strain ATCC VR-613 / Malish 7)</name>
    <dbReference type="NCBI Taxonomy" id="272944"/>
    <lineage>
        <taxon>Bacteria</taxon>
        <taxon>Pseudomonadati</taxon>
        <taxon>Pseudomonadota</taxon>
        <taxon>Alphaproteobacteria</taxon>
        <taxon>Rickettsiales</taxon>
        <taxon>Rickettsiaceae</taxon>
        <taxon>Rickettsieae</taxon>
        <taxon>Rickettsia</taxon>
        <taxon>spotted fever group</taxon>
    </lineage>
</organism>
<name>LEPA_RICCN</name>
<sequence>MNHQKYIRNFSIIAHIDHGKSTLADRLIEHCGGLQAREMSQQVLDSMDIEKERGITIKAQTVRLVYKAKDGNNYYLNLMDTPGHVDFAYEVSRSLAACEGSLLVVDSTQGVEAQTLANVYQAIENDHEIVLVLNKLDLPASEPEQVKQQIEDIIGIDTSEAVLISAKSGIGIDLVLEAIVNKLPPPKESSSDILKALLVDSWYDPYLGVVILVRVIDGYLRKNMRIKMMATNSVYTVENVGYFTPKKHISDVLHAGEIGFFTAAIKQVADCKVGDTITDEKKPCEQALPGFKPNLPVVFCGLYPTDSSEFEHLKDSLAKLRLNDASFEYEMESSSALGVGFRCGFLGLLHLEIIQERLSREFDLDLITTAPSVVYKIHMRDGENLEIHNPADLPDLQKIESMEEPWIKATIMVPDEFLGAVLSLCTEKRGMQLDHSYIANRAKIIYKLPLNEIVYDFYDRLKSCSKGYASFEWQMDVYEPSELVKLGILVNAEVVDALSTIVHRSRAEQRGRALCVRLKDLIPRQQIDIAIQASIGSRIIARETIKALRKDVLSKCYGGDISRKRKLLEKQKAGKKRMRQYGNIEIPQSAFIAALKIGDE</sequence>
<proteinExistence type="inferred from homology"/>
<keyword id="KW-0997">Cell inner membrane</keyword>
<keyword id="KW-1003">Cell membrane</keyword>
<keyword id="KW-0342">GTP-binding</keyword>
<keyword id="KW-0378">Hydrolase</keyword>
<keyword id="KW-0472">Membrane</keyword>
<keyword id="KW-0547">Nucleotide-binding</keyword>
<keyword id="KW-0648">Protein biosynthesis</keyword>
<protein>
    <recommendedName>
        <fullName evidence="1">Elongation factor 4</fullName>
        <shortName evidence="1">EF-4</shortName>
        <ecNumber evidence="1">3.6.5.n1</ecNumber>
    </recommendedName>
    <alternativeName>
        <fullName evidence="1">Ribosomal back-translocase LepA</fullName>
    </alternativeName>
</protein>
<comment type="function">
    <text evidence="1">Required for accurate and efficient protein synthesis under certain stress conditions. May act as a fidelity factor of the translation reaction, by catalyzing a one-codon backward translocation of tRNAs on improperly translocated ribosomes. Back-translocation proceeds from a post-translocation (POST) complex to a pre-translocation (PRE) complex, thus giving elongation factor G a second chance to translocate the tRNAs correctly. Binds to ribosomes in a GTP-dependent manner.</text>
</comment>
<comment type="catalytic activity">
    <reaction evidence="1">
        <text>GTP + H2O = GDP + phosphate + H(+)</text>
        <dbReference type="Rhea" id="RHEA:19669"/>
        <dbReference type="ChEBI" id="CHEBI:15377"/>
        <dbReference type="ChEBI" id="CHEBI:15378"/>
        <dbReference type="ChEBI" id="CHEBI:37565"/>
        <dbReference type="ChEBI" id="CHEBI:43474"/>
        <dbReference type="ChEBI" id="CHEBI:58189"/>
        <dbReference type="EC" id="3.6.5.n1"/>
    </reaction>
</comment>
<comment type="subcellular location">
    <subcellularLocation>
        <location evidence="1">Cell inner membrane</location>
        <topology evidence="1">Peripheral membrane protein</topology>
        <orientation evidence="1">Cytoplasmic side</orientation>
    </subcellularLocation>
</comment>
<comment type="similarity">
    <text evidence="1">Belongs to the TRAFAC class translation factor GTPase superfamily. Classic translation factor GTPase family. LepA subfamily.</text>
</comment>
<evidence type="ECO:0000255" key="1">
    <source>
        <dbReference type="HAMAP-Rule" id="MF_00071"/>
    </source>
</evidence>
<dbReference type="EC" id="3.6.5.n1" evidence="1"/>
<dbReference type="EMBL" id="AE006914">
    <property type="protein sequence ID" value="AAL02907.1"/>
    <property type="molecule type" value="Genomic_DNA"/>
</dbReference>
<dbReference type="PIR" id="A97746">
    <property type="entry name" value="A97746"/>
</dbReference>
<dbReference type="RefSeq" id="WP_010977024.1">
    <property type="nucleotide sequence ID" value="NC_003103.1"/>
</dbReference>
<dbReference type="SMR" id="Q92IQ1"/>
<dbReference type="GeneID" id="927527"/>
<dbReference type="KEGG" id="rco:RC0369"/>
<dbReference type="PATRIC" id="fig|272944.4.peg.419"/>
<dbReference type="HOGENOM" id="CLU_009995_3_3_5"/>
<dbReference type="Proteomes" id="UP000000816">
    <property type="component" value="Chromosome"/>
</dbReference>
<dbReference type="GO" id="GO:0005886">
    <property type="term" value="C:plasma membrane"/>
    <property type="evidence" value="ECO:0007669"/>
    <property type="project" value="UniProtKB-SubCell"/>
</dbReference>
<dbReference type="GO" id="GO:0005525">
    <property type="term" value="F:GTP binding"/>
    <property type="evidence" value="ECO:0007669"/>
    <property type="project" value="UniProtKB-UniRule"/>
</dbReference>
<dbReference type="GO" id="GO:0003924">
    <property type="term" value="F:GTPase activity"/>
    <property type="evidence" value="ECO:0007669"/>
    <property type="project" value="UniProtKB-UniRule"/>
</dbReference>
<dbReference type="GO" id="GO:0097216">
    <property type="term" value="F:guanosine tetraphosphate binding"/>
    <property type="evidence" value="ECO:0007669"/>
    <property type="project" value="UniProtKB-ARBA"/>
</dbReference>
<dbReference type="GO" id="GO:0043022">
    <property type="term" value="F:ribosome binding"/>
    <property type="evidence" value="ECO:0007669"/>
    <property type="project" value="UniProtKB-UniRule"/>
</dbReference>
<dbReference type="GO" id="GO:0003746">
    <property type="term" value="F:translation elongation factor activity"/>
    <property type="evidence" value="ECO:0007669"/>
    <property type="project" value="UniProtKB-UniRule"/>
</dbReference>
<dbReference type="GO" id="GO:0045727">
    <property type="term" value="P:positive regulation of translation"/>
    <property type="evidence" value="ECO:0007669"/>
    <property type="project" value="UniProtKB-UniRule"/>
</dbReference>
<dbReference type="CDD" id="cd03699">
    <property type="entry name" value="EF4_II"/>
    <property type="match status" value="1"/>
</dbReference>
<dbReference type="CDD" id="cd16260">
    <property type="entry name" value="EF4_III"/>
    <property type="match status" value="1"/>
</dbReference>
<dbReference type="CDD" id="cd01890">
    <property type="entry name" value="LepA"/>
    <property type="match status" value="1"/>
</dbReference>
<dbReference type="CDD" id="cd03709">
    <property type="entry name" value="lepA_C"/>
    <property type="match status" value="1"/>
</dbReference>
<dbReference type="FunFam" id="3.40.50.300:FF:000078">
    <property type="entry name" value="Elongation factor 4"/>
    <property type="match status" value="1"/>
</dbReference>
<dbReference type="FunFam" id="2.40.30.10:FF:000015">
    <property type="entry name" value="Translation factor GUF1, mitochondrial"/>
    <property type="match status" value="1"/>
</dbReference>
<dbReference type="FunFam" id="3.30.70.240:FF:000007">
    <property type="entry name" value="Translation factor GUF1, mitochondrial"/>
    <property type="match status" value="1"/>
</dbReference>
<dbReference type="FunFam" id="3.30.70.2570:FF:000001">
    <property type="entry name" value="Translation factor GUF1, mitochondrial"/>
    <property type="match status" value="1"/>
</dbReference>
<dbReference type="FunFam" id="3.30.70.870:FF:000004">
    <property type="entry name" value="Translation factor GUF1, mitochondrial"/>
    <property type="match status" value="1"/>
</dbReference>
<dbReference type="Gene3D" id="3.30.70.240">
    <property type="match status" value="1"/>
</dbReference>
<dbReference type="Gene3D" id="3.30.70.2570">
    <property type="entry name" value="Elongation factor 4, C-terminal domain"/>
    <property type="match status" value="1"/>
</dbReference>
<dbReference type="Gene3D" id="3.30.70.870">
    <property type="entry name" value="Elongation Factor G (Translational Gtpase), domain 3"/>
    <property type="match status" value="1"/>
</dbReference>
<dbReference type="Gene3D" id="3.40.50.300">
    <property type="entry name" value="P-loop containing nucleotide triphosphate hydrolases"/>
    <property type="match status" value="1"/>
</dbReference>
<dbReference type="Gene3D" id="2.40.30.10">
    <property type="entry name" value="Translation factors"/>
    <property type="match status" value="1"/>
</dbReference>
<dbReference type="HAMAP" id="MF_00071">
    <property type="entry name" value="LepA"/>
    <property type="match status" value="1"/>
</dbReference>
<dbReference type="InterPro" id="IPR006297">
    <property type="entry name" value="EF-4"/>
</dbReference>
<dbReference type="InterPro" id="IPR035647">
    <property type="entry name" value="EFG_III/V"/>
</dbReference>
<dbReference type="InterPro" id="IPR000640">
    <property type="entry name" value="EFG_V-like"/>
</dbReference>
<dbReference type="InterPro" id="IPR004161">
    <property type="entry name" value="EFTu-like_2"/>
</dbReference>
<dbReference type="InterPro" id="IPR031157">
    <property type="entry name" value="G_TR_CS"/>
</dbReference>
<dbReference type="InterPro" id="IPR038363">
    <property type="entry name" value="LepA_C_sf"/>
</dbReference>
<dbReference type="InterPro" id="IPR013842">
    <property type="entry name" value="LepA_CTD"/>
</dbReference>
<dbReference type="InterPro" id="IPR035654">
    <property type="entry name" value="LepA_IV"/>
</dbReference>
<dbReference type="InterPro" id="IPR027417">
    <property type="entry name" value="P-loop_NTPase"/>
</dbReference>
<dbReference type="InterPro" id="IPR005225">
    <property type="entry name" value="Small_GTP-bd"/>
</dbReference>
<dbReference type="InterPro" id="IPR000795">
    <property type="entry name" value="T_Tr_GTP-bd_dom"/>
</dbReference>
<dbReference type="NCBIfam" id="TIGR01393">
    <property type="entry name" value="lepA"/>
    <property type="match status" value="1"/>
</dbReference>
<dbReference type="NCBIfam" id="TIGR00231">
    <property type="entry name" value="small_GTP"/>
    <property type="match status" value="1"/>
</dbReference>
<dbReference type="PANTHER" id="PTHR43512:SF4">
    <property type="entry name" value="TRANSLATION FACTOR GUF1 HOMOLOG, CHLOROPLASTIC"/>
    <property type="match status" value="1"/>
</dbReference>
<dbReference type="PANTHER" id="PTHR43512">
    <property type="entry name" value="TRANSLATION FACTOR GUF1-RELATED"/>
    <property type="match status" value="1"/>
</dbReference>
<dbReference type="Pfam" id="PF00679">
    <property type="entry name" value="EFG_C"/>
    <property type="match status" value="1"/>
</dbReference>
<dbReference type="Pfam" id="PF00009">
    <property type="entry name" value="GTP_EFTU"/>
    <property type="match status" value="1"/>
</dbReference>
<dbReference type="Pfam" id="PF03144">
    <property type="entry name" value="GTP_EFTU_D2"/>
    <property type="match status" value="1"/>
</dbReference>
<dbReference type="Pfam" id="PF06421">
    <property type="entry name" value="LepA_C"/>
    <property type="match status" value="1"/>
</dbReference>
<dbReference type="PRINTS" id="PR00315">
    <property type="entry name" value="ELONGATNFCT"/>
</dbReference>
<dbReference type="SMART" id="SM00838">
    <property type="entry name" value="EFG_C"/>
    <property type="match status" value="1"/>
</dbReference>
<dbReference type="SUPFAM" id="SSF54980">
    <property type="entry name" value="EF-G C-terminal domain-like"/>
    <property type="match status" value="2"/>
</dbReference>
<dbReference type="SUPFAM" id="SSF52540">
    <property type="entry name" value="P-loop containing nucleoside triphosphate hydrolases"/>
    <property type="match status" value="1"/>
</dbReference>
<dbReference type="PROSITE" id="PS00301">
    <property type="entry name" value="G_TR_1"/>
    <property type="match status" value="1"/>
</dbReference>
<dbReference type="PROSITE" id="PS51722">
    <property type="entry name" value="G_TR_2"/>
    <property type="match status" value="1"/>
</dbReference>
<feature type="chain" id="PRO_0000176333" description="Elongation factor 4">
    <location>
        <begin position="1"/>
        <end position="600"/>
    </location>
</feature>
<feature type="domain" description="tr-type G">
    <location>
        <begin position="5"/>
        <end position="187"/>
    </location>
</feature>
<feature type="binding site" evidence="1">
    <location>
        <begin position="17"/>
        <end position="22"/>
    </location>
    <ligand>
        <name>GTP</name>
        <dbReference type="ChEBI" id="CHEBI:37565"/>
    </ligand>
</feature>
<feature type="binding site" evidence="1">
    <location>
        <begin position="134"/>
        <end position="137"/>
    </location>
    <ligand>
        <name>GTP</name>
        <dbReference type="ChEBI" id="CHEBI:37565"/>
    </ligand>
</feature>
<accession>Q92IQ1</accession>
<gene>
    <name evidence="1" type="primary">lepA</name>
    <name type="ordered locus">RC0369</name>
</gene>